<protein>
    <recommendedName>
        <fullName>Antiholin-like protein LrgA</fullName>
    </recommendedName>
</protein>
<organism>
    <name type="scientific">Staphylococcus aureus (strain NCTC 8325 / PS 47)</name>
    <dbReference type="NCBI Taxonomy" id="93061"/>
    <lineage>
        <taxon>Bacteria</taxon>
        <taxon>Bacillati</taxon>
        <taxon>Bacillota</taxon>
        <taxon>Bacilli</taxon>
        <taxon>Bacillales</taxon>
        <taxon>Staphylococcaceae</taxon>
        <taxon>Staphylococcus</taxon>
    </lineage>
</organism>
<dbReference type="EMBL" id="U52961">
    <property type="protein sequence ID" value="AAC44839.1"/>
    <property type="molecule type" value="Genomic_DNA"/>
</dbReference>
<dbReference type="EMBL" id="CP000253">
    <property type="protein sequence ID" value="ABD29407.1"/>
    <property type="molecule type" value="Genomic_DNA"/>
</dbReference>
<dbReference type="RefSeq" id="WP_001792906.1">
    <property type="nucleotide sequence ID" value="NZ_LS483365.1"/>
</dbReference>
<dbReference type="RefSeq" id="YP_498827.1">
    <property type="nucleotide sequence ID" value="NC_007795.1"/>
</dbReference>
<dbReference type="SMR" id="P72358"/>
<dbReference type="STRING" id="93061.SAOUHSC_00232"/>
<dbReference type="TCDB" id="1.E.14.1.1">
    <property type="family name" value="the cida/lrga holin (cida/lrga holin) family"/>
</dbReference>
<dbReference type="PaxDb" id="1280-SAXN108_0242"/>
<dbReference type="GeneID" id="3920307"/>
<dbReference type="KEGG" id="sao:SAOUHSC_00232"/>
<dbReference type="PATRIC" id="fig|93061.5.peg.213"/>
<dbReference type="eggNOG" id="COG1380">
    <property type="taxonomic scope" value="Bacteria"/>
</dbReference>
<dbReference type="HOGENOM" id="CLU_113736_0_1_9"/>
<dbReference type="OrthoDB" id="3176438at2"/>
<dbReference type="PRO" id="PR:P72358"/>
<dbReference type="Proteomes" id="UP000008816">
    <property type="component" value="Chromosome"/>
</dbReference>
<dbReference type="GO" id="GO:0005886">
    <property type="term" value="C:plasma membrane"/>
    <property type="evidence" value="ECO:0007669"/>
    <property type="project" value="UniProtKB-SubCell"/>
</dbReference>
<dbReference type="GO" id="GO:0019835">
    <property type="term" value="P:cytolysis"/>
    <property type="evidence" value="ECO:0007669"/>
    <property type="project" value="UniProtKB-UniRule"/>
</dbReference>
<dbReference type="GO" id="GO:0031640">
    <property type="term" value="P:killing of cells of another organism"/>
    <property type="evidence" value="ECO:0007669"/>
    <property type="project" value="UniProtKB-KW"/>
</dbReference>
<dbReference type="GO" id="GO:0012501">
    <property type="term" value="P:programmed cell death"/>
    <property type="evidence" value="ECO:0007669"/>
    <property type="project" value="UniProtKB-UniRule"/>
</dbReference>
<dbReference type="HAMAP" id="MF_01141">
    <property type="entry name" value="LrgA"/>
    <property type="match status" value="1"/>
</dbReference>
<dbReference type="InterPro" id="IPR023736">
    <property type="entry name" value="Antiholin-like_LrgA"/>
</dbReference>
<dbReference type="InterPro" id="IPR005538">
    <property type="entry name" value="LrgA/CidA"/>
</dbReference>
<dbReference type="NCBIfam" id="NF003155">
    <property type="entry name" value="PRK04125.1"/>
    <property type="match status" value="1"/>
</dbReference>
<dbReference type="PANTHER" id="PTHR33931:SF4">
    <property type="entry name" value="ANTIHOLIN-LIKE PROTEIN LRGA"/>
    <property type="match status" value="1"/>
</dbReference>
<dbReference type="PANTHER" id="PTHR33931">
    <property type="entry name" value="HOLIN-LIKE PROTEIN CIDA-RELATED"/>
    <property type="match status" value="1"/>
</dbReference>
<dbReference type="Pfam" id="PF03788">
    <property type="entry name" value="LrgA"/>
    <property type="match status" value="1"/>
</dbReference>
<reference key="1">
    <citation type="journal article" date="1996" name="J. Bacteriol.">
        <title>Identification of LytSR-regulated genes from Staphylococcus aureus.</title>
        <authorList>
            <person name="Brunskill E.W."/>
            <person name="Bayles K.W."/>
        </authorList>
    </citation>
    <scope>NUCLEOTIDE SEQUENCE [GENOMIC DNA]</scope>
    <scope>REGULATION BY LYTR/LYTS</scope>
</reference>
<reference key="2">
    <citation type="book" date="2006" name="Gram positive pathogens, 2nd edition">
        <title>The Staphylococcus aureus NCTC 8325 genome.</title>
        <editorList>
            <person name="Fischetti V."/>
            <person name="Novick R."/>
            <person name="Ferretti J."/>
            <person name="Portnoy D."/>
            <person name="Rood J."/>
        </editorList>
        <authorList>
            <person name="Gillaspy A.F."/>
            <person name="Worrell V."/>
            <person name="Orvis J."/>
            <person name="Roe B.A."/>
            <person name="Dyer D.W."/>
            <person name="Iandolo J.J."/>
        </authorList>
    </citation>
    <scope>NUCLEOTIDE SEQUENCE [LARGE SCALE GENOMIC DNA]</scope>
    <source>
        <strain>NCTC 8325 / PS 47</strain>
    </source>
</reference>
<reference key="3">
    <citation type="journal article" date="2000" name="J. Bacteriol.">
        <title>The Staphylococcus aureus lrgAB operon modulates murein hydrolase activity and penicillin tolerance.</title>
        <authorList>
            <person name="Groicher K.H."/>
            <person name="Firek B.A."/>
            <person name="Fujimoto D.F."/>
            <person name="Bayles K.W."/>
        </authorList>
    </citation>
    <scope>FUNCTION</scope>
</reference>
<reference key="4">
    <citation type="journal article" date="2003" name="J. Bacteriol.">
        <title>The Staphylococcus aureus cidAB operon: evaluation of its role in regulation of murein hydrolase activity and penicillin tolerance.</title>
        <authorList>
            <person name="Rice K.C."/>
            <person name="Firek B.A."/>
            <person name="Nelson J.B."/>
            <person name="Yang S.-J."/>
            <person name="Patton T.G."/>
            <person name="Bayles K.W."/>
        </authorList>
    </citation>
    <scope>INTERACTION WITH CIDAB</scope>
</reference>
<reference key="5">
    <citation type="journal article" date="2003" name="Mol. Microbiol.">
        <title>Death's toolbox: examining the molecular components of bacterial programmed cell death.</title>
        <authorList>
            <person name="Rice K.C."/>
            <person name="Bayles K.W."/>
        </authorList>
    </citation>
    <scope>REVIEW</scope>
</reference>
<accession>P72358</accession>
<accession>Q2G1B3</accession>
<name>LRGA_STAA8</name>
<gene>
    <name type="primary">lrgA</name>
    <name type="ordered locus">SAOUHSC_00232</name>
</gene>
<sequence>MVVKQQKDASKPAHFFHQVIVIALVLFVSKIIESFMPIPMPASVIGLVLLFVLLCTGAVKLGEVEKVGTTLTNNIGLLFVPAGISVVNSLGVISQAPFLIIGLIIVSTILLLICTGYVTQIIMKVTSRSKGDKVTKKIKIEEAQAHD</sequence>
<evidence type="ECO:0000255" key="1"/>
<evidence type="ECO:0000269" key="2">
    <source>
    </source>
</evidence>
<evidence type="ECO:0000305" key="3"/>
<proteinExistence type="evidence at protein level"/>
<keyword id="KW-1003">Cell membrane</keyword>
<keyword id="KW-0204">Cytolysis</keyword>
<keyword id="KW-0472">Membrane</keyword>
<keyword id="KW-1185">Reference proteome</keyword>
<keyword id="KW-0812">Transmembrane</keyword>
<keyword id="KW-1133">Transmembrane helix</keyword>
<comment type="function">
    <text evidence="2">Inhibits the expression or activity of extracellular murein hydrolases by interacting, possibly with LrgB, with the holin-like proteins CidA and/or CidB. The LrgAB and CidAB proteins may affect the proton motive force of the membrane. Increases tolerance to penicillin possibly by inhibiting the formation of the CidAB holin-like complexes within the membrane, thus reducing penicillin-induced lethality. Possibly plays a role in programmed cell death (PCD), triggering PCD in response to penicillin, and possibly other antibiotics, and environmental stresses.</text>
</comment>
<comment type="subcellular location">
    <subcellularLocation>
        <location evidence="3">Cell membrane</location>
        <topology evidence="3">Multi-pass membrane protein</topology>
    </subcellularLocation>
</comment>
<comment type="induction">
    <text>Regulated by the two-component system LytR/LytS.</text>
</comment>
<comment type="similarity">
    <text evidence="3">Belongs to the CidA/LrgA family. LrgA subfamily.</text>
</comment>
<feature type="chain" id="PRO_0000213195" description="Antiholin-like protein LrgA">
    <location>
        <begin position="1"/>
        <end position="147"/>
    </location>
</feature>
<feature type="transmembrane region" description="Helical" evidence="1">
    <location>
        <begin position="13"/>
        <end position="32"/>
    </location>
</feature>
<feature type="transmembrane region" description="Helical" evidence="1">
    <location>
        <begin position="42"/>
        <end position="64"/>
    </location>
</feature>
<feature type="transmembrane region" description="Helical" evidence="1">
    <location>
        <begin position="71"/>
        <end position="93"/>
    </location>
</feature>
<feature type="transmembrane region" description="Helical" evidence="1">
    <location>
        <begin position="97"/>
        <end position="119"/>
    </location>
</feature>